<name>TRPD_HELPH</name>
<accession>Q1CRX3</accession>
<gene>
    <name evidence="1" type="primary">trpD</name>
    <name type="ordered locus">HPAG1_1232</name>
</gene>
<proteinExistence type="inferred from homology"/>
<evidence type="ECO:0000255" key="1">
    <source>
        <dbReference type="HAMAP-Rule" id="MF_00211"/>
    </source>
</evidence>
<comment type="function">
    <text evidence="1">Catalyzes the transfer of the phosphoribosyl group of 5-phosphorylribose-1-pyrophosphate (PRPP) to anthranilate to yield N-(5'-phosphoribosyl)-anthranilate (PRA).</text>
</comment>
<comment type="catalytic activity">
    <reaction evidence="1">
        <text>N-(5-phospho-beta-D-ribosyl)anthranilate + diphosphate = 5-phospho-alpha-D-ribose 1-diphosphate + anthranilate</text>
        <dbReference type="Rhea" id="RHEA:11768"/>
        <dbReference type="ChEBI" id="CHEBI:16567"/>
        <dbReference type="ChEBI" id="CHEBI:18277"/>
        <dbReference type="ChEBI" id="CHEBI:33019"/>
        <dbReference type="ChEBI" id="CHEBI:58017"/>
        <dbReference type="EC" id="2.4.2.18"/>
    </reaction>
</comment>
<comment type="cofactor">
    <cofactor evidence="1">
        <name>Mg(2+)</name>
        <dbReference type="ChEBI" id="CHEBI:18420"/>
    </cofactor>
    <text evidence="1">Binds 2 magnesium ions per monomer.</text>
</comment>
<comment type="pathway">
    <text evidence="1">Amino-acid biosynthesis; L-tryptophan biosynthesis; L-tryptophan from chorismate: step 2/5.</text>
</comment>
<comment type="subunit">
    <text evidence="1">Homodimer.</text>
</comment>
<comment type="similarity">
    <text evidence="1">Belongs to the anthranilate phosphoribosyltransferase family.</text>
</comment>
<protein>
    <recommendedName>
        <fullName evidence="1">Anthranilate phosphoribosyltransferase</fullName>
        <ecNumber evidence="1">2.4.2.18</ecNumber>
    </recommendedName>
</protein>
<sequence length="335" mass="36756">MKEILNALYHQKDLNDEEVKKLFTLIIHEKVSPVQLGTILCALKIKGESFKEISVAATTLLEHAPKPFDSGLDLIDNCGTGGDGLKTINVSTIAALIASSMGLSMAKHGSRSVSSHSGSADLLENLGVNIEMNPTQLENCFKQTHFGFLFAPLYHQSFKKSAPLRKELFTKTIFNCLGPLINPLRPKIQLLGVYDRSLCKTMALALKALGVKRAMVVNGGGTDEIVLHDITHACELKNSEILEYDLSAKDFDLPPYDLKELQIENAQESVQACLDILGNKGKDSHTMVVVANVASLLYLSHKAKDLKEGVSMTLEHLKTKAPYTHLQKIIRLSHA</sequence>
<feature type="chain" id="PRO_1000043014" description="Anthranilate phosphoribosyltransferase">
    <location>
        <begin position="1"/>
        <end position="335"/>
    </location>
</feature>
<feature type="binding site" evidence="1">
    <location>
        <position position="79"/>
    </location>
    <ligand>
        <name>5-phospho-alpha-D-ribose 1-diphosphate</name>
        <dbReference type="ChEBI" id="CHEBI:58017"/>
    </ligand>
</feature>
<feature type="binding site" evidence="1">
    <location>
        <position position="79"/>
    </location>
    <ligand>
        <name>anthranilate</name>
        <dbReference type="ChEBI" id="CHEBI:16567"/>
        <label>1</label>
    </ligand>
</feature>
<feature type="binding site" evidence="1">
    <location>
        <begin position="82"/>
        <end position="83"/>
    </location>
    <ligand>
        <name>5-phospho-alpha-D-ribose 1-diphosphate</name>
        <dbReference type="ChEBI" id="CHEBI:58017"/>
    </ligand>
</feature>
<feature type="binding site" evidence="1">
    <location>
        <position position="87"/>
    </location>
    <ligand>
        <name>5-phospho-alpha-D-ribose 1-diphosphate</name>
        <dbReference type="ChEBI" id="CHEBI:58017"/>
    </ligand>
</feature>
<feature type="binding site" evidence="1">
    <location>
        <begin position="89"/>
        <end position="92"/>
    </location>
    <ligand>
        <name>5-phospho-alpha-D-ribose 1-diphosphate</name>
        <dbReference type="ChEBI" id="CHEBI:58017"/>
    </ligand>
</feature>
<feature type="binding site" evidence="1">
    <location>
        <position position="91"/>
    </location>
    <ligand>
        <name>Mg(2+)</name>
        <dbReference type="ChEBI" id="CHEBI:18420"/>
        <label>1</label>
    </ligand>
</feature>
<feature type="binding site" evidence="1">
    <location>
        <begin position="107"/>
        <end position="115"/>
    </location>
    <ligand>
        <name>5-phospho-alpha-D-ribose 1-diphosphate</name>
        <dbReference type="ChEBI" id="CHEBI:58017"/>
    </ligand>
</feature>
<feature type="binding site" evidence="1">
    <location>
        <position position="119"/>
    </location>
    <ligand>
        <name>5-phospho-alpha-D-ribose 1-diphosphate</name>
        <dbReference type="ChEBI" id="CHEBI:58017"/>
    </ligand>
</feature>
<feature type="binding site" evidence="1">
    <location>
        <position position="165"/>
    </location>
    <ligand>
        <name>anthranilate</name>
        <dbReference type="ChEBI" id="CHEBI:16567"/>
        <label>2</label>
    </ligand>
</feature>
<feature type="binding site" evidence="1">
    <location>
        <position position="223"/>
    </location>
    <ligand>
        <name>Mg(2+)</name>
        <dbReference type="ChEBI" id="CHEBI:18420"/>
        <label>2</label>
    </ligand>
</feature>
<feature type="binding site" evidence="1">
    <location>
        <position position="224"/>
    </location>
    <ligand>
        <name>Mg(2+)</name>
        <dbReference type="ChEBI" id="CHEBI:18420"/>
        <label>1</label>
    </ligand>
</feature>
<feature type="binding site" evidence="1">
    <location>
        <position position="224"/>
    </location>
    <ligand>
        <name>Mg(2+)</name>
        <dbReference type="ChEBI" id="CHEBI:18420"/>
        <label>2</label>
    </ligand>
</feature>
<organism>
    <name type="scientific">Helicobacter pylori (strain HPAG1)</name>
    <dbReference type="NCBI Taxonomy" id="357544"/>
    <lineage>
        <taxon>Bacteria</taxon>
        <taxon>Pseudomonadati</taxon>
        <taxon>Campylobacterota</taxon>
        <taxon>Epsilonproteobacteria</taxon>
        <taxon>Campylobacterales</taxon>
        <taxon>Helicobacteraceae</taxon>
        <taxon>Helicobacter</taxon>
    </lineage>
</organism>
<reference key="1">
    <citation type="journal article" date="2006" name="Proc. Natl. Acad. Sci. U.S.A.">
        <title>The complete genome sequence of a chronic atrophic gastritis Helicobacter pylori strain: evolution during disease progression.</title>
        <authorList>
            <person name="Oh J.D."/>
            <person name="Kling-Baeckhed H."/>
            <person name="Giannakis M."/>
            <person name="Xu J."/>
            <person name="Fulton R.S."/>
            <person name="Fulton L.A."/>
            <person name="Cordum H.S."/>
            <person name="Wang C."/>
            <person name="Elliott G."/>
            <person name="Edwards J."/>
            <person name="Mardis E.R."/>
            <person name="Engstrand L.G."/>
            <person name="Gordon J.I."/>
        </authorList>
    </citation>
    <scope>NUCLEOTIDE SEQUENCE [LARGE SCALE GENOMIC DNA]</scope>
    <source>
        <strain>HPAG1</strain>
    </source>
</reference>
<keyword id="KW-0028">Amino-acid biosynthesis</keyword>
<keyword id="KW-0057">Aromatic amino acid biosynthesis</keyword>
<keyword id="KW-0328">Glycosyltransferase</keyword>
<keyword id="KW-0460">Magnesium</keyword>
<keyword id="KW-0479">Metal-binding</keyword>
<keyword id="KW-0808">Transferase</keyword>
<keyword id="KW-0822">Tryptophan biosynthesis</keyword>
<dbReference type="EC" id="2.4.2.18" evidence="1"/>
<dbReference type="EMBL" id="CP000241">
    <property type="protein sequence ID" value="ABF85299.1"/>
    <property type="molecule type" value="Genomic_DNA"/>
</dbReference>
<dbReference type="RefSeq" id="WP_000658923.1">
    <property type="nucleotide sequence ID" value="NC_008086.1"/>
</dbReference>
<dbReference type="SMR" id="Q1CRX3"/>
<dbReference type="KEGG" id="hpa:HPAG1_1232"/>
<dbReference type="HOGENOM" id="CLU_034315_2_1_7"/>
<dbReference type="UniPathway" id="UPA00035">
    <property type="reaction ID" value="UER00041"/>
</dbReference>
<dbReference type="GO" id="GO:0005829">
    <property type="term" value="C:cytosol"/>
    <property type="evidence" value="ECO:0007669"/>
    <property type="project" value="TreeGrafter"/>
</dbReference>
<dbReference type="GO" id="GO:0004048">
    <property type="term" value="F:anthranilate phosphoribosyltransferase activity"/>
    <property type="evidence" value="ECO:0007669"/>
    <property type="project" value="UniProtKB-UniRule"/>
</dbReference>
<dbReference type="GO" id="GO:0000287">
    <property type="term" value="F:magnesium ion binding"/>
    <property type="evidence" value="ECO:0007669"/>
    <property type="project" value="UniProtKB-UniRule"/>
</dbReference>
<dbReference type="GO" id="GO:0000162">
    <property type="term" value="P:L-tryptophan biosynthetic process"/>
    <property type="evidence" value="ECO:0007669"/>
    <property type="project" value="UniProtKB-UniRule"/>
</dbReference>
<dbReference type="FunFam" id="3.40.1030.10:FF:000002">
    <property type="entry name" value="Anthranilate phosphoribosyltransferase"/>
    <property type="match status" value="1"/>
</dbReference>
<dbReference type="Gene3D" id="3.40.1030.10">
    <property type="entry name" value="Nucleoside phosphorylase/phosphoribosyltransferase catalytic domain"/>
    <property type="match status" value="1"/>
</dbReference>
<dbReference type="Gene3D" id="1.20.970.10">
    <property type="entry name" value="Transferase, Pyrimidine Nucleoside Phosphorylase, Chain C"/>
    <property type="match status" value="1"/>
</dbReference>
<dbReference type="HAMAP" id="MF_00211">
    <property type="entry name" value="TrpD"/>
    <property type="match status" value="1"/>
</dbReference>
<dbReference type="InterPro" id="IPR005940">
    <property type="entry name" value="Anthranilate_Pribosyl_Tfrase"/>
</dbReference>
<dbReference type="InterPro" id="IPR000312">
    <property type="entry name" value="Glycosyl_Trfase_fam3"/>
</dbReference>
<dbReference type="InterPro" id="IPR017459">
    <property type="entry name" value="Glycosyl_Trfase_fam3_N_dom"/>
</dbReference>
<dbReference type="InterPro" id="IPR036320">
    <property type="entry name" value="Glycosyl_Trfase_fam3_N_dom_sf"/>
</dbReference>
<dbReference type="InterPro" id="IPR035902">
    <property type="entry name" value="Nuc_phospho_transferase"/>
</dbReference>
<dbReference type="NCBIfam" id="TIGR01245">
    <property type="entry name" value="trpD"/>
    <property type="match status" value="1"/>
</dbReference>
<dbReference type="PANTHER" id="PTHR43285">
    <property type="entry name" value="ANTHRANILATE PHOSPHORIBOSYLTRANSFERASE"/>
    <property type="match status" value="1"/>
</dbReference>
<dbReference type="PANTHER" id="PTHR43285:SF2">
    <property type="entry name" value="ANTHRANILATE PHOSPHORIBOSYLTRANSFERASE"/>
    <property type="match status" value="1"/>
</dbReference>
<dbReference type="Pfam" id="PF02885">
    <property type="entry name" value="Glycos_trans_3N"/>
    <property type="match status" value="1"/>
</dbReference>
<dbReference type="Pfam" id="PF00591">
    <property type="entry name" value="Glycos_transf_3"/>
    <property type="match status" value="1"/>
</dbReference>
<dbReference type="SUPFAM" id="SSF52418">
    <property type="entry name" value="Nucleoside phosphorylase/phosphoribosyltransferase catalytic domain"/>
    <property type="match status" value="1"/>
</dbReference>
<dbReference type="SUPFAM" id="SSF47648">
    <property type="entry name" value="Nucleoside phosphorylase/phosphoribosyltransferase N-terminal domain"/>
    <property type="match status" value="1"/>
</dbReference>